<reference key="1">
    <citation type="submission" date="2007-03" db="EMBL/GenBank/DDBJ databases">
        <title>Complete sequence of Shewanella loihica PV-4.</title>
        <authorList>
            <consortium name="US DOE Joint Genome Institute"/>
            <person name="Copeland A."/>
            <person name="Lucas S."/>
            <person name="Lapidus A."/>
            <person name="Barry K."/>
            <person name="Detter J.C."/>
            <person name="Glavina del Rio T."/>
            <person name="Hammon N."/>
            <person name="Israni S."/>
            <person name="Dalin E."/>
            <person name="Tice H."/>
            <person name="Pitluck S."/>
            <person name="Chain P."/>
            <person name="Malfatti S."/>
            <person name="Shin M."/>
            <person name="Vergez L."/>
            <person name="Schmutz J."/>
            <person name="Larimer F."/>
            <person name="Land M."/>
            <person name="Hauser L."/>
            <person name="Kyrpides N."/>
            <person name="Mikhailova N."/>
            <person name="Romine M.F."/>
            <person name="Serres G."/>
            <person name="Fredrickson J."/>
            <person name="Tiedje J."/>
            <person name="Richardson P."/>
        </authorList>
    </citation>
    <scope>NUCLEOTIDE SEQUENCE [LARGE SCALE GENOMIC DNA]</scope>
    <source>
        <strain>ATCC BAA-1088 / PV-4</strain>
    </source>
</reference>
<sequence>MAKGQSLQDPFLNALRRERVPVSIYLVNGIKLQGQVESFDQFVILLKNTVSQMVYKHAISTVVPARPFNVSSHHNTPNQAAGYNASHDDSAE</sequence>
<feature type="chain" id="PRO_1000025935" description="RNA-binding protein Hfq">
    <location>
        <begin position="1"/>
        <end position="92"/>
    </location>
</feature>
<feature type="domain" description="Sm" evidence="2">
    <location>
        <begin position="9"/>
        <end position="68"/>
    </location>
</feature>
<feature type="region of interest" description="Disordered" evidence="3">
    <location>
        <begin position="68"/>
        <end position="92"/>
    </location>
</feature>
<feature type="compositionally biased region" description="Polar residues" evidence="3">
    <location>
        <begin position="69"/>
        <end position="81"/>
    </location>
</feature>
<organism>
    <name type="scientific">Shewanella loihica (strain ATCC BAA-1088 / PV-4)</name>
    <dbReference type="NCBI Taxonomy" id="323850"/>
    <lineage>
        <taxon>Bacteria</taxon>
        <taxon>Pseudomonadati</taxon>
        <taxon>Pseudomonadota</taxon>
        <taxon>Gammaproteobacteria</taxon>
        <taxon>Alteromonadales</taxon>
        <taxon>Shewanellaceae</taxon>
        <taxon>Shewanella</taxon>
    </lineage>
</organism>
<accession>A3QAE0</accession>
<evidence type="ECO:0000255" key="1">
    <source>
        <dbReference type="HAMAP-Rule" id="MF_00436"/>
    </source>
</evidence>
<evidence type="ECO:0000255" key="2">
    <source>
        <dbReference type="PROSITE-ProRule" id="PRU01346"/>
    </source>
</evidence>
<evidence type="ECO:0000256" key="3">
    <source>
        <dbReference type="SAM" id="MobiDB-lite"/>
    </source>
</evidence>
<proteinExistence type="inferred from homology"/>
<dbReference type="EMBL" id="CP000606">
    <property type="protein sequence ID" value="ABO22438.1"/>
    <property type="molecule type" value="Genomic_DNA"/>
</dbReference>
<dbReference type="RefSeq" id="WP_011864372.1">
    <property type="nucleotide sequence ID" value="NC_009092.1"/>
</dbReference>
<dbReference type="SMR" id="A3QAE0"/>
<dbReference type="STRING" id="323850.Shew_0566"/>
<dbReference type="KEGG" id="slo:Shew_0566"/>
<dbReference type="eggNOG" id="COG1923">
    <property type="taxonomic scope" value="Bacteria"/>
</dbReference>
<dbReference type="HOGENOM" id="CLU_113688_2_2_6"/>
<dbReference type="OrthoDB" id="9799751at2"/>
<dbReference type="Proteomes" id="UP000001558">
    <property type="component" value="Chromosome"/>
</dbReference>
<dbReference type="GO" id="GO:0005829">
    <property type="term" value="C:cytosol"/>
    <property type="evidence" value="ECO:0007669"/>
    <property type="project" value="TreeGrafter"/>
</dbReference>
<dbReference type="GO" id="GO:0003723">
    <property type="term" value="F:RNA binding"/>
    <property type="evidence" value="ECO:0007669"/>
    <property type="project" value="UniProtKB-UniRule"/>
</dbReference>
<dbReference type="GO" id="GO:0006355">
    <property type="term" value="P:regulation of DNA-templated transcription"/>
    <property type="evidence" value="ECO:0007669"/>
    <property type="project" value="InterPro"/>
</dbReference>
<dbReference type="GO" id="GO:0043487">
    <property type="term" value="P:regulation of RNA stability"/>
    <property type="evidence" value="ECO:0007669"/>
    <property type="project" value="TreeGrafter"/>
</dbReference>
<dbReference type="GO" id="GO:0045974">
    <property type="term" value="P:regulation of translation, ncRNA-mediated"/>
    <property type="evidence" value="ECO:0007669"/>
    <property type="project" value="TreeGrafter"/>
</dbReference>
<dbReference type="CDD" id="cd01716">
    <property type="entry name" value="Hfq"/>
    <property type="match status" value="1"/>
</dbReference>
<dbReference type="FunFam" id="2.30.30.100:FF:000001">
    <property type="entry name" value="RNA-binding protein Hfq"/>
    <property type="match status" value="1"/>
</dbReference>
<dbReference type="Gene3D" id="2.30.30.100">
    <property type="match status" value="1"/>
</dbReference>
<dbReference type="HAMAP" id="MF_00436">
    <property type="entry name" value="Hfq"/>
    <property type="match status" value="1"/>
</dbReference>
<dbReference type="InterPro" id="IPR005001">
    <property type="entry name" value="Hfq"/>
</dbReference>
<dbReference type="InterPro" id="IPR010920">
    <property type="entry name" value="LSM_dom_sf"/>
</dbReference>
<dbReference type="InterPro" id="IPR047575">
    <property type="entry name" value="Sm"/>
</dbReference>
<dbReference type="NCBIfam" id="TIGR02383">
    <property type="entry name" value="Hfq"/>
    <property type="match status" value="1"/>
</dbReference>
<dbReference type="NCBIfam" id="NF001602">
    <property type="entry name" value="PRK00395.1"/>
    <property type="match status" value="1"/>
</dbReference>
<dbReference type="PANTHER" id="PTHR34772">
    <property type="entry name" value="RNA-BINDING PROTEIN HFQ"/>
    <property type="match status" value="1"/>
</dbReference>
<dbReference type="PANTHER" id="PTHR34772:SF1">
    <property type="entry name" value="RNA-BINDING PROTEIN HFQ"/>
    <property type="match status" value="1"/>
</dbReference>
<dbReference type="Pfam" id="PF17209">
    <property type="entry name" value="Hfq"/>
    <property type="match status" value="1"/>
</dbReference>
<dbReference type="SUPFAM" id="SSF50182">
    <property type="entry name" value="Sm-like ribonucleoproteins"/>
    <property type="match status" value="1"/>
</dbReference>
<dbReference type="PROSITE" id="PS52002">
    <property type="entry name" value="SM"/>
    <property type="match status" value="1"/>
</dbReference>
<comment type="function">
    <text evidence="1">RNA chaperone that binds small regulatory RNA (sRNAs) and mRNAs to facilitate mRNA translational regulation in response to envelope stress, environmental stress and changes in metabolite concentrations. Also binds with high specificity to tRNAs.</text>
</comment>
<comment type="subunit">
    <text evidence="1">Homohexamer.</text>
</comment>
<comment type="similarity">
    <text evidence="1">Belongs to the Hfq family.</text>
</comment>
<keyword id="KW-1185">Reference proteome</keyword>
<keyword id="KW-0694">RNA-binding</keyword>
<keyword id="KW-0346">Stress response</keyword>
<protein>
    <recommendedName>
        <fullName evidence="1">RNA-binding protein Hfq</fullName>
    </recommendedName>
</protein>
<name>HFQ_SHELP</name>
<gene>
    <name evidence="1" type="primary">hfq</name>
    <name type="ordered locus">Shew_0566</name>
</gene>